<sequence length="418" mass="45170">MTYLEIEGTNHLSGNVAISGAKNAALPLIVSSILVKNEVKINNVPNVADIKTLISLLENLGAKVNFQNNNALLNTNTLNQTIAKYDIVRKMRASILTLGPLLARFGHCEVSLPGGCAIGQRPIDLHLLALEKMGANIQIKQGYVVASGNLKGNEILFDKITVTGSENIIMAAALAKGKTKLLNVAKEPEVVQLCEVLKDAGLEIKGIGTDELEIYGTDGELLEFKEFSVIPDRIEAGTYLCAGAITNSKITLDKVNATHLSAVLAKLHQMGFETLITEDSITLLPAKEIKPVEIMTSEHPGFPTDMQAQFMALALKANGTSIIDERLFENRFMHVSELLRMGADIKLNGHIATIVGGKELNAADVMATDLRASSALILAALAAKGTSKVHRIYHLDRGYENLEEKFKGLGVKITRLEE</sequence>
<proteinExistence type="inferred from homology"/>
<name>MURA_CAMJD</name>
<feature type="chain" id="PRO_1000023026" description="UDP-N-acetylglucosamine 1-carboxyvinyltransferase">
    <location>
        <begin position="1"/>
        <end position="418"/>
    </location>
</feature>
<feature type="active site" description="Proton donor" evidence="1">
    <location>
        <position position="116"/>
    </location>
</feature>
<feature type="binding site" evidence="1">
    <location>
        <begin position="22"/>
        <end position="23"/>
    </location>
    <ligand>
        <name>phosphoenolpyruvate</name>
        <dbReference type="ChEBI" id="CHEBI:58702"/>
    </ligand>
</feature>
<feature type="binding site" evidence="1">
    <location>
        <position position="92"/>
    </location>
    <ligand>
        <name>UDP-N-acetyl-alpha-D-glucosamine</name>
        <dbReference type="ChEBI" id="CHEBI:57705"/>
    </ligand>
</feature>
<feature type="binding site" evidence="1">
    <location>
        <begin position="121"/>
        <end position="125"/>
    </location>
    <ligand>
        <name>UDP-N-acetyl-alpha-D-glucosamine</name>
        <dbReference type="ChEBI" id="CHEBI:57705"/>
    </ligand>
</feature>
<feature type="binding site" evidence="1">
    <location>
        <position position="305"/>
    </location>
    <ligand>
        <name>UDP-N-acetyl-alpha-D-glucosamine</name>
        <dbReference type="ChEBI" id="CHEBI:57705"/>
    </ligand>
</feature>
<feature type="binding site" evidence="1">
    <location>
        <position position="327"/>
    </location>
    <ligand>
        <name>UDP-N-acetyl-alpha-D-glucosamine</name>
        <dbReference type="ChEBI" id="CHEBI:57705"/>
    </ligand>
</feature>
<feature type="modified residue" description="2-(S-cysteinyl)pyruvic acid O-phosphothioketal" evidence="1">
    <location>
        <position position="116"/>
    </location>
</feature>
<keyword id="KW-0131">Cell cycle</keyword>
<keyword id="KW-0132">Cell division</keyword>
<keyword id="KW-0133">Cell shape</keyword>
<keyword id="KW-0961">Cell wall biogenesis/degradation</keyword>
<keyword id="KW-0963">Cytoplasm</keyword>
<keyword id="KW-0573">Peptidoglycan synthesis</keyword>
<keyword id="KW-0670">Pyruvate</keyword>
<keyword id="KW-0808">Transferase</keyword>
<dbReference type="EC" id="2.5.1.7" evidence="1"/>
<dbReference type="EMBL" id="CP000768">
    <property type="protein sequence ID" value="ABS43653.1"/>
    <property type="molecule type" value="Genomic_DNA"/>
</dbReference>
<dbReference type="SMR" id="A7H3N6"/>
<dbReference type="KEGG" id="cjd:JJD26997_1007"/>
<dbReference type="HOGENOM" id="CLU_027387_0_0_7"/>
<dbReference type="UniPathway" id="UPA00219"/>
<dbReference type="Proteomes" id="UP000002302">
    <property type="component" value="Chromosome"/>
</dbReference>
<dbReference type="GO" id="GO:0005737">
    <property type="term" value="C:cytoplasm"/>
    <property type="evidence" value="ECO:0007669"/>
    <property type="project" value="UniProtKB-SubCell"/>
</dbReference>
<dbReference type="GO" id="GO:0008760">
    <property type="term" value="F:UDP-N-acetylglucosamine 1-carboxyvinyltransferase activity"/>
    <property type="evidence" value="ECO:0007669"/>
    <property type="project" value="UniProtKB-UniRule"/>
</dbReference>
<dbReference type="GO" id="GO:0051301">
    <property type="term" value="P:cell division"/>
    <property type="evidence" value="ECO:0007669"/>
    <property type="project" value="UniProtKB-KW"/>
</dbReference>
<dbReference type="GO" id="GO:0071555">
    <property type="term" value="P:cell wall organization"/>
    <property type="evidence" value="ECO:0007669"/>
    <property type="project" value="UniProtKB-KW"/>
</dbReference>
<dbReference type="GO" id="GO:0009252">
    <property type="term" value="P:peptidoglycan biosynthetic process"/>
    <property type="evidence" value="ECO:0007669"/>
    <property type="project" value="UniProtKB-UniRule"/>
</dbReference>
<dbReference type="GO" id="GO:0008360">
    <property type="term" value="P:regulation of cell shape"/>
    <property type="evidence" value="ECO:0007669"/>
    <property type="project" value="UniProtKB-KW"/>
</dbReference>
<dbReference type="GO" id="GO:0019277">
    <property type="term" value="P:UDP-N-acetylgalactosamine biosynthetic process"/>
    <property type="evidence" value="ECO:0007669"/>
    <property type="project" value="InterPro"/>
</dbReference>
<dbReference type="CDD" id="cd01555">
    <property type="entry name" value="UdpNAET"/>
    <property type="match status" value="1"/>
</dbReference>
<dbReference type="FunFam" id="3.65.10.10:FF:000001">
    <property type="entry name" value="UDP-N-acetylglucosamine 1-carboxyvinyltransferase"/>
    <property type="match status" value="1"/>
</dbReference>
<dbReference type="Gene3D" id="3.65.10.10">
    <property type="entry name" value="Enolpyruvate transferase domain"/>
    <property type="match status" value="2"/>
</dbReference>
<dbReference type="HAMAP" id="MF_00111">
    <property type="entry name" value="MurA"/>
    <property type="match status" value="1"/>
</dbReference>
<dbReference type="InterPro" id="IPR001986">
    <property type="entry name" value="Enolpyruvate_Tfrase_dom"/>
</dbReference>
<dbReference type="InterPro" id="IPR036968">
    <property type="entry name" value="Enolpyruvate_Tfrase_sf"/>
</dbReference>
<dbReference type="InterPro" id="IPR050068">
    <property type="entry name" value="MurA_subfamily"/>
</dbReference>
<dbReference type="InterPro" id="IPR013792">
    <property type="entry name" value="RNA3'P_cycl/enolpyr_Trfase_a/b"/>
</dbReference>
<dbReference type="InterPro" id="IPR005750">
    <property type="entry name" value="UDP_GlcNAc_COvinyl_MurA"/>
</dbReference>
<dbReference type="NCBIfam" id="TIGR01072">
    <property type="entry name" value="murA"/>
    <property type="match status" value="1"/>
</dbReference>
<dbReference type="NCBIfam" id="NF006873">
    <property type="entry name" value="PRK09369.1"/>
    <property type="match status" value="1"/>
</dbReference>
<dbReference type="PANTHER" id="PTHR43783">
    <property type="entry name" value="UDP-N-ACETYLGLUCOSAMINE 1-CARBOXYVINYLTRANSFERASE"/>
    <property type="match status" value="1"/>
</dbReference>
<dbReference type="PANTHER" id="PTHR43783:SF1">
    <property type="entry name" value="UDP-N-ACETYLGLUCOSAMINE 1-CARBOXYVINYLTRANSFERASE"/>
    <property type="match status" value="1"/>
</dbReference>
<dbReference type="Pfam" id="PF00275">
    <property type="entry name" value="EPSP_synthase"/>
    <property type="match status" value="1"/>
</dbReference>
<dbReference type="SUPFAM" id="SSF55205">
    <property type="entry name" value="EPT/RTPC-like"/>
    <property type="match status" value="1"/>
</dbReference>
<organism>
    <name type="scientific">Campylobacter jejuni subsp. doylei (strain ATCC BAA-1458 / RM4099 / 269.97)</name>
    <dbReference type="NCBI Taxonomy" id="360109"/>
    <lineage>
        <taxon>Bacteria</taxon>
        <taxon>Pseudomonadati</taxon>
        <taxon>Campylobacterota</taxon>
        <taxon>Epsilonproteobacteria</taxon>
        <taxon>Campylobacterales</taxon>
        <taxon>Campylobacteraceae</taxon>
        <taxon>Campylobacter</taxon>
    </lineage>
</organism>
<protein>
    <recommendedName>
        <fullName evidence="1">UDP-N-acetylglucosamine 1-carboxyvinyltransferase</fullName>
        <ecNumber evidence="1">2.5.1.7</ecNumber>
    </recommendedName>
    <alternativeName>
        <fullName evidence="1">Enoylpyruvate transferase</fullName>
    </alternativeName>
    <alternativeName>
        <fullName evidence="1">UDP-N-acetylglucosamine enolpyruvyl transferase</fullName>
        <shortName evidence="1">EPT</shortName>
    </alternativeName>
</protein>
<accession>A7H3N6</accession>
<gene>
    <name evidence="1" type="primary">murA</name>
    <name type="ordered locus">JJD26997_1007</name>
</gene>
<comment type="function">
    <text evidence="1">Cell wall formation. Adds enolpyruvyl to UDP-N-acetylglucosamine.</text>
</comment>
<comment type="catalytic activity">
    <reaction evidence="1">
        <text>phosphoenolpyruvate + UDP-N-acetyl-alpha-D-glucosamine = UDP-N-acetyl-3-O-(1-carboxyvinyl)-alpha-D-glucosamine + phosphate</text>
        <dbReference type="Rhea" id="RHEA:18681"/>
        <dbReference type="ChEBI" id="CHEBI:43474"/>
        <dbReference type="ChEBI" id="CHEBI:57705"/>
        <dbReference type="ChEBI" id="CHEBI:58702"/>
        <dbReference type="ChEBI" id="CHEBI:68483"/>
        <dbReference type="EC" id="2.5.1.7"/>
    </reaction>
</comment>
<comment type="pathway">
    <text evidence="1">Cell wall biogenesis; peptidoglycan biosynthesis.</text>
</comment>
<comment type="subcellular location">
    <subcellularLocation>
        <location evidence="1">Cytoplasm</location>
    </subcellularLocation>
</comment>
<comment type="similarity">
    <text evidence="1">Belongs to the EPSP synthase family. MurA subfamily.</text>
</comment>
<reference key="1">
    <citation type="submission" date="2007-07" db="EMBL/GenBank/DDBJ databases">
        <title>Complete genome sequence of Campylobacter jejuni subsp doylei 269.97 isolated from human blood.</title>
        <authorList>
            <person name="Fouts D.E."/>
            <person name="Mongodin E.F."/>
            <person name="Puiu D."/>
            <person name="Sebastian Y."/>
            <person name="Miller W.G."/>
            <person name="Mandrell R.E."/>
            <person name="Lastovica A.J."/>
            <person name="Nelson K.E."/>
        </authorList>
    </citation>
    <scope>NUCLEOTIDE SEQUENCE [LARGE SCALE GENOMIC DNA]</scope>
    <source>
        <strain>ATCC BAA-1458 / RM4099 / 269.97</strain>
    </source>
</reference>
<evidence type="ECO:0000255" key="1">
    <source>
        <dbReference type="HAMAP-Rule" id="MF_00111"/>
    </source>
</evidence>